<comment type="function">
    <text evidence="1">Catalyzes the biosynthesis of agmatine from arginine.</text>
</comment>
<comment type="catalytic activity">
    <reaction evidence="1">
        <text>L-arginine + H(+) = agmatine + CO2</text>
        <dbReference type="Rhea" id="RHEA:17641"/>
        <dbReference type="ChEBI" id="CHEBI:15378"/>
        <dbReference type="ChEBI" id="CHEBI:16526"/>
        <dbReference type="ChEBI" id="CHEBI:32682"/>
        <dbReference type="ChEBI" id="CHEBI:58145"/>
        <dbReference type="EC" id="4.1.1.19"/>
    </reaction>
</comment>
<comment type="cofactor">
    <cofactor evidence="1">
        <name>Mg(2+)</name>
        <dbReference type="ChEBI" id="CHEBI:18420"/>
    </cofactor>
</comment>
<comment type="cofactor">
    <cofactor evidence="1">
        <name>pyridoxal 5'-phosphate</name>
        <dbReference type="ChEBI" id="CHEBI:597326"/>
    </cofactor>
</comment>
<comment type="pathway">
    <text evidence="1">Amine and polyamine biosynthesis; agmatine biosynthesis; agmatine from L-arginine: step 1/1.</text>
</comment>
<comment type="similarity">
    <text evidence="1">Belongs to the Orn/Lys/Arg decarboxylase class-II family. SpeA subfamily.</text>
</comment>
<proteinExistence type="inferred from homology"/>
<sequence>MSSQEASKMLRTYNIAWWGNNYYDVNELGHISVCPDPDVPEARVDLAELVKAREAQGQRLPALFCFPQILQHRLRSINAAFKRARESYGYNGDYFLVYPIKVNQHRRVIESLIHSGEPLGLEAGSKAELMAVLAHAGMTRSVIVCNGYKDREYIRLALVGEKMGHKVYLVIEKMSEIAIVLEEAERLNVVPRLGVRARLASQGSGKWQSSGGEKSKFGLAATQVLQLVEILRAAGHLESLQLLHFHLGSQMANIRDIATGVRESARFYVELHKLGVNIQCFDVGGGLGVDYEGTRSQSDCSVNYGLNEYANNIIWAIGDACEENGLPHPTVITESGRAVTAHHTVLVSNIIGVERNEYTEATPPAEDAARPLQSMWETWLEMHETGNRRSLREWLHDSQMDLHDIHIGYSSGTFNLQERAWAEQLYLNMCHEVQKQLDPSNRAHRPIIDELQERMADKIYVNFSLFQSMPDAWGIDQLFPVMPLEGLNKSPERRAVLLDITCDSDGAIDHYVDGDGIATTMPMPEYDPENPPMLGFFMVGAYQEILGNMHNLFGDTEAVDVFVFPDGSVEVELSDEGDTVADMLQYVQLDPNTLLTQFRDQVKNTGLDDALQQQFLEEFEAGLYGYTYLEDE</sequence>
<dbReference type="EC" id="4.1.1.19" evidence="1"/>
<dbReference type="EMBL" id="CP000964">
    <property type="protein sequence ID" value="ACI09897.1"/>
    <property type="molecule type" value="Genomic_DNA"/>
</dbReference>
<dbReference type="SMR" id="B5XUB1"/>
<dbReference type="KEGG" id="kpe:KPK_0737"/>
<dbReference type="HOGENOM" id="CLU_027243_1_0_6"/>
<dbReference type="UniPathway" id="UPA00186">
    <property type="reaction ID" value="UER00284"/>
</dbReference>
<dbReference type="Proteomes" id="UP000001734">
    <property type="component" value="Chromosome"/>
</dbReference>
<dbReference type="GO" id="GO:0008792">
    <property type="term" value="F:arginine decarboxylase activity"/>
    <property type="evidence" value="ECO:0007669"/>
    <property type="project" value="UniProtKB-UniRule"/>
</dbReference>
<dbReference type="GO" id="GO:0046872">
    <property type="term" value="F:metal ion binding"/>
    <property type="evidence" value="ECO:0007669"/>
    <property type="project" value="UniProtKB-KW"/>
</dbReference>
<dbReference type="GO" id="GO:0006527">
    <property type="term" value="P:arginine catabolic process"/>
    <property type="evidence" value="ECO:0007669"/>
    <property type="project" value="InterPro"/>
</dbReference>
<dbReference type="GO" id="GO:0033388">
    <property type="term" value="P:putrescine biosynthetic process from arginine"/>
    <property type="evidence" value="ECO:0007669"/>
    <property type="project" value="TreeGrafter"/>
</dbReference>
<dbReference type="GO" id="GO:0008295">
    <property type="term" value="P:spermidine biosynthetic process"/>
    <property type="evidence" value="ECO:0007669"/>
    <property type="project" value="UniProtKB-UniRule"/>
</dbReference>
<dbReference type="CDD" id="cd06830">
    <property type="entry name" value="PLPDE_III_ADC"/>
    <property type="match status" value="1"/>
</dbReference>
<dbReference type="FunFam" id="1.10.287.3440:FF:000001">
    <property type="entry name" value="Biosynthetic arginine decarboxylase"/>
    <property type="match status" value="1"/>
</dbReference>
<dbReference type="FunFam" id="1.20.58.930:FF:000001">
    <property type="entry name" value="Biosynthetic arginine decarboxylase"/>
    <property type="match status" value="1"/>
</dbReference>
<dbReference type="FunFam" id="2.40.37.10:FF:000001">
    <property type="entry name" value="Biosynthetic arginine decarboxylase"/>
    <property type="match status" value="1"/>
</dbReference>
<dbReference type="FunFam" id="3.20.20.10:FF:000001">
    <property type="entry name" value="Biosynthetic arginine decarboxylase"/>
    <property type="match status" value="1"/>
</dbReference>
<dbReference type="Gene3D" id="1.10.287.3440">
    <property type="match status" value="1"/>
</dbReference>
<dbReference type="Gene3D" id="1.20.58.930">
    <property type="match status" value="1"/>
</dbReference>
<dbReference type="Gene3D" id="3.20.20.10">
    <property type="entry name" value="Alanine racemase"/>
    <property type="match status" value="1"/>
</dbReference>
<dbReference type="Gene3D" id="2.40.37.10">
    <property type="entry name" value="Lyase, Ornithine Decarboxylase, Chain A, domain 1"/>
    <property type="match status" value="1"/>
</dbReference>
<dbReference type="HAMAP" id="MF_01417">
    <property type="entry name" value="SpeA"/>
    <property type="match status" value="1"/>
</dbReference>
<dbReference type="InterPro" id="IPR009006">
    <property type="entry name" value="Ala_racemase/Decarboxylase_C"/>
</dbReference>
<dbReference type="InterPro" id="IPR040634">
    <property type="entry name" value="Arg_decarb_HB"/>
</dbReference>
<dbReference type="InterPro" id="IPR041128">
    <property type="entry name" value="Arg_decarbox_C"/>
</dbReference>
<dbReference type="InterPro" id="IPR002985">
    <property type="entry name" value="Arg_decrbxlase"/>
</dbReference>
<dbReference type="InterPro" id="IPR022657">
    <property type="entry name" value="De-COase2_CS"/>
</dbReference>
<dbReference type="InterPro" id="IPR022644">
    <property type="entry name" value="De-COase2_N"/>
</dbReference>
<dbReference type="InterPro" id="IPR022653">
    <property type="entry name" value="De-COase2_pyr-phos_BS"/>
</dbReference>
<dbReference type="InterPro" id="IPR000183">
    <property type="entry name" value="Orn/DAP/Arg_de-COase"/>
</dbReference>
<dbReference type="InterPro" id="IPR029066">
    <property type="entry name" value="PLP-binding_barrel"/>
</dbReference>
<dbReference type="NCBIfam" id="NF003763">
    <property type="entry name" value="PRK05354.1"/>
    <property type="match status" value="1"/>
</dbReference>
<dbReference type="NCBIfam" id="TIGR01273">
    <property type="entry name" value="speA"/>
    <property type="match status" value="1"/>
</dbReference>
<dbReference type="PANTHER" id="PTHR43295">
    <property type="entry name" value="ARGININE DECARBOXYLASE"/>
    <property type="match status" value="1"/>
</dbReference>
<dbReference type="PANTHER" id="PTHR43295:SF9">
    <property type="entry name" value="BIOSYNTHETIC ARGININE DECARBOXYLASE"/>
    <property type="match status" value="1"/>
</dbReference>
<dbReference type="Pfam" id="PF17810">
    <property type="entry name" value="Arg_decarb_HB"/>
    <property type="match status" value="1"/>
</dbReference>
<dbReference type="Pfam" id="PF17944">
    <property type="entry name" value="Arg_decarbox_C"/>
    <property type="match status" value="1"/>
</dbReference>
<dbReference type="Pfam" id="PF02784">
    <property type="entry name" value="Orn_Arg_deC_N"/>
    <property type="match status" value="1"/>
</dbReference>
<dbReference type="PIRSF" id="PIRSF001336">
    <property type="entry name" value="Arg_decrbxlase"/>
    <property type="match status" value="1"/>
</dbReference>
<dbReference type="PRINTS" id="PR01180">
    <property type="entry name" value="ARGDCRBXLASE"/>
</dbReference>
<dbReference type="PRINTS" id="PR01179">
    <property type="entry name" value="ODADCRBXLASE"/>
</dbReference>
<dbReference type="SUPFAM" id="SSF50621">
    <property type="entry name" value="Alanine racemase C-terminal domain-like"/>
    <property type="match status" value="1"/>
</dbReference>
<dbReference type="SUPFAM" id="SSF51419">
    <property type="entry name" value="PLP-binding barrel"/>
    <property type="match status" value="1"/>
</dbReference>
<dbReference type="PROSITE" id="PS00878">
    <property type="entry name" value="ODR_DC_2_1"/>
    <property type="match status" value="1"/>
</dbReference>
<dbReference type="PROSITE" id="PS00879">
    <property type="entry name" value="ODR_DC_2_2"/>
    <property type="match status" value="1"/>
</dbReference>
<gene>
    <name evidence="1" type="primary">speA</name>
    <name type="ordered locus">KPK_0737</name>
</gene>
<accession>B5XUB1</accession>
<feature type="chain" id="PRO_1000145596" description="Biosynthetic arginine decarboxylase">
    <location>
        <begin position="1"/>
        <end position="632"/>
    </location>
</feature>
<feature type="binding site" evidence="1">
    <location>
        <begin position="281"/>
        <end position="291"/>
    </location>
    <ligand>
        <name>substrate</name>
    </ligand>
</feature>
<feature type="modified residue" description="N6-(pyridoxal phosphate)lysine" evidence="1">
    <location>
        <position position="101"/>
    </location>
</feature>
<keyword id="KW-0210">Decarboxylase</keyword>
<keyword id="KW-0456">Lyase</keyword>
<keyword id="KW-0460">Magnesium</keyword>
<keyword id="KW-0479">Metal-binding</keyword>
<keyword id="KW-0620">Polyamine biosynthesis</keyword>
<keyword id="KW-0661">Putrescine biosynthesis</keyword>
<keyword id="KW-0663">Pyridoxal phosphate</keyword>
<keyword id="KW-0745">Spermidine biosynthesis</keyword>
<organism>
    <name type="scientific">Klebsiella pneumoniae (strain 342)</name>
    <dbReference type="NCBI Taxonomy" id="507522"/>
    <lineage>
        <taxon>Bacteria</taxon>
        <taxon>Pseudomonadati</taxon>
        <taxon>Pseudomonadota</taxon>
        <taxon>Gammaproteobacteria</taxon>
        <taxon>Enterobacterales</taxon>
        <taxon>Enterobacteriaceae</taxon>
        <taxon>Klebsiella/Raoultella group</taxon>
        <taxon>Klebsiella</taxon>
        <taxon>Klebsiella pneumoniae complex</taxon>
    </lineage>
</organism>
<protein>
    <recommendedName>
        <fullName evidence="1">Biosynthetic arginine decarboxylase</fullName>
        <shortName evidence="1">ADC</shortName>
        <ecNumber evidence="1">4.1.1.19</ecNumber>
    </recommendedName>
</protein>
<name>SPEA_KLEP3</name>
<reference key="1">
    <citation type="journal article" date="2008" name="PLoS Genet.">
        <title>Complete genome sequence of the N2-fixing broad host range endophyte Klebsiella pneumoniae 342 and virulence predictions verified in mice.</title>
        <authorList>
            <person name="Fouts D.E."/>
            <person name="Tyler H.L."/>
            <person name="DeBoy R.T."/>
            <person name="Daugherty S."/>
            <person name="Ren Q."/>
            <person name="Badger J.H."/>
            <person name="Durkin A.S."/>
            <person name="Huot H."/>
            <person name="Shrivastava S."/>
            <person name="Kothari S."/>
            <person name="Dodson R.J."/>
            <person name="Mohamoud Y."/>
            <person name="Khouri H."/>
            <person name="Roesch L.F.W."/>
            <person name="Krogfelt K.A."/>
            <person name="Struve C."/>
            <person name="Triplett E.W."/>
            <person name="Methe B.A."/>
        </authorList>
    </citation>
    <scope>NUCLEOTIDE SEQUENCE [LARGE SCALE GENOMIC DNA]</scope>
    <source>
        <strain>342</strain>
    </source>
</reference>
<evidence type="ECO:0000255" key="1">
    <source>
        <dbReference type="HAMAP-Rule" id="MF_01417"/>
    </source>
</evidence>